<sequence length="255" mass="29292">MKAYAKANIFLKLTGFDSRKYHLLESRFILLKDVFDELELVDKESDSKKEFEIISNFKCENNIIQKAYLLLSRRYNNELKELFSKKSLKLTKNIPVCAGLGGGSSDCASFLLLMNETLNLKLNLQELINLSIQLGSDIAFFLSGFNSANVSGCGEIIEEFEDDIPTLKWTFPQISCQTKAVYDEFDREIFDFQKNNNQAQIYKKLSTKELLQNFKNKELNDLFTPCATLYPKMKSYLQEDFFLSGSGSSVFKVDR</sequence>
<organism>
    <name type="scientific">Campylobacter jejuni subsp. doylei (strain ATCC BAA-1458 / RM4099 / 269.97)</name>
    <dbReference type="NCBI Taxonomy" id="360109"/>
    <lineage>
        <taxon>Bacteria</taxon>
        <taxon>Pseudomonadati</taxon>
        <taxon>Campylobacterota</taxon>
        <taxon>Epsilonproteobacteria</taxon>
        <taxon>Campylobacterales</taxon>
        <taxon>Campylobacteraceae</taxon>
        <taxon>Campylobacter</taxon>
    </lineage>
</organism>
<dbReference type="EC" id="2.7.1.148" evidence="1"/>
<dbReference type="EMBL" id="CP000768">
    <property type="protein sequence ID" value="ABS43498.1"/>
    <property type="molecule type" value="Genomic_DNA"/>
</dbReference>
<dbReference type="SMR" id="A7H2Q3"/>
<dbReference type="KEGG" id="cjd:JJD26997_0618"/>
<dbReference type="HOGENOM" id="CLU_053057_2_2_7"/>
<dbReference type="UniPathway" id="UPA00056">
    <property type="reaction ID" value="UER00094"/>
</dbReference>
<dbReference type="Proteomes" id="UP000002302">
    <property type="component" value="Chromosome"/>
</dbReference>
<dbReference type="GO" id="GO:0050515">
    <property type="term" value="F:4-(cytidine 5'-diphospho)-2-C-methyl-D-erythritol kinase activity"/>
    <property type="evidence" value="ECO:0007669"/>
    <property type="project" value="UniProtKB-UniRule"/>
</dbReference>
<dbReference type="GO" id="GO:0005524">
    <property type="term" value="F:ATP binding"/>
    <property type="evidence" value="ECO:0007669"/>
    <property type="project" value="UniProtKB-UniRule"/>
</dbReference>
<dbReference type="GO" id="GO:0019288">
    <property type="term" value="P:isopentenyl diphosphate biosynthetic process, methylerythritol 4-phosphate pathway"/>
    <property type="evidence" value="ECO:0007669"/>
    <property type="project" value="UniProtKB-UniRule"/>
</dbReference>
<dbReference type="GO" id="GO:0016114">
    <property type="term" value="P:terpenoid biosynthetic process"/>
    <property type="evidence" value="ECO:0007669"/>
    <property type="project" value="InterPro"/>
</dbReference>
<dbReference type="Gene3D" id="3.30.230.10">
    <property type="match status" value="1"/>
</dbReference>
<dbReference type="Gene3D" id="3.30.70.890">
    <property type="entry name" value="GHMP kinase, C-terminal domain"/>
    <property type="match status" value="1"/>
</dbReference>
<dbReference type="HAMAP" id="MF_00061">
    <property type="entry name" value="IspE"/>
    <property type="match status" value="1"/>
</dbReference>
<dbReference type="InterPro" id="IPR036554">
    <property type="entry name" value="GHMP_kinase_C_sf"/>
</dbReference>
<dbReference type="InterPro" id="IPR006204">
    <property type="entry name" value="GHMP_kinase_N_dom"/>
</dbReference>
<dbReference type="InterPro" id="IPR004424">
    <property type="entry name" value="IspE"/>
</dbReference>
<dbReference type="InterPro" id="IPR020568">
    <property type="entry name" value="Ribosomal_Su5_D2-typ_SF"/>
</dbReference>
<dbReference type="InterPro" id="IPR014721">
    <property type="entry name" value="Ribsml_uS5_D2-typ_fold_subgr"/>
</dbReference>
<dbReference type="NCBIfam" id="TIGR00154">
    <property type="entry name" value="ispE"/>
    <property type="match status" value="1"/>
</dbReference>
<dbReference type="NCBIfam" id="NF003216">
    <property type="entry name" value="PRK04181.1"/>
    <property type="match status" value="1"/>
</dbReference>
<dbReference type="PANTHER" id="PTHR43527">
    <property type="entry name" value="4-DIPHOSPHOCYTIDYL-2-C-METHYL-D-ERYTHRITOL KINASE, CHLOROPLASTIC"/>
    <property type="match status" value="1"/>
</dbReference>
<dbReference type="PANTHER" id="PTHR43527:SF2">
    <property type="entry name" value="4-DIPHOSPHOCYTIDYL-2-C-METHYL-D-ERYTHRITOL KINASE, CHLOROPLASTIC"/>
    <property type="match status" value="1"/>
</dbReference>
<dbReference type="Pfam" id="PF00288">
    <property type="entry name" value="GHMP_kinases_N"/>
    <property type="match status" value="1"/>
</dbReference>
<dbReference type="PIRSF" id="PIRSF010376">
    <property type="entry name" value="IspE"/>
    <property type="match status" value="1"/>
</dbReference>
<dbReference type="SUPFAM" id="SSF55060">
    <property type="entry name" value="GHMP Kinase, C-terminal domain"/>
    <property type="match status" value="1"/>
</dbReference>
<dbReference type="SUPFAM" id="SSF54211">
    <property type="entry name" value="Ribosomal protein S5 domain 2-like"/>
    <property type="match status" value="1"/>
</dbReference>
<comment type="function">
    <text evidence="1">Catalyzes the phosphorylation of the position 2 hydroxy group of 4-diphosphocytidyl-2C-methyl-D-erythritol.</text>
</comment>
<comment type="catalytic activity">
    <reaction evidence="1">
        <text>4-CDP-2-C-methyl-D-erythritol + ATP = 4-CDP-2-C-methyl-D-erythritol 2-phosphate + ADP + H(+)</text>
        <dbReference type="Rhea" id="RHEA:18437"/>
        <dbReference type="ChEBI" id="CHEBI:15378"/>
        <dbReference type="ChEBI" id="CHEBI:30616"/>
        <dbReference type="ChEBI" id="CHEBI:57823"/>
        <dbReference type="ChEBI" id="CHEBI:57919"/>
        <dbReference type="ChEBI" id="CHEBI:456216"/>
        <dbReference type="EC" id="2.7.1.148"/>
    </reaction>
</comment>
<comment type="pathway">
    <text evidence="1">Isoprenoid biosynthesis; isopentenyl diphosphate biosynthesis via DXP pathway; isopentenyl diphosphate from 1-deoxy-D-xylulose 5-phosphate: step 3/6.</text>
</comment>
<comment type="similarity">
    <text evidence="1">Belongs to the GHMP kinase family. IspE subfamily.</text>
</comment>
<accession>A7H2Q3</accession>
<gene>
    <name evidence="1" type="primary">ispE</name>
    <name type="ordered locus">JJD26997_0618</name>
</gene>
<protein>
    <recommendedName>
        <fullName evidence="1">4-diphosphocytidyl-2-C-methyl-D-erythritol kinase</fullName>
        <shortName evidence="1">CMK</shortName>
        <ecNumber evidence="1">2.7.1.148</ecNumber>
    </recommendedName>
    <alternativeName>
        <fullName evidence="1">4-(cytidine-5'-diphospho)-2-C-methyl-D-erythritol kinase</fullName>
    </alternativeName>
</protein>
<keyword id="KW-0067">ATP-binding</keyword>
<keyword id="KW-0414">Isoprene biosynthesis</keyword>
<keyword id="KW-0418">Kinase</keyword>
<keyword id="KW-0547">Nucleotide-binding</keyword>
<keyword id="KW-0808">Transferase</keyword>
<reference key="1">
    <citation type="submission" date="2007-07" db="EMBL/GenBank/DDBJ databases">
        <title>Complete genome sequence of Campylobacter jejuni subsp doylei 269.97 isolated from human blood.</title>
        <authorList>
            <person name="Fouts D.E."/>
            <person name="Mongodin E.F."/>
            <person name="Puiu D."/>
            <person name="Sebastian Y."/>
            <person name="Miller W.G."/>
            <person name="Mandrell R.E."/>
            <person name="Lastovica A.J."/>
            <person name="Nelson K.E."/>
        </authorList>
    </citation>
    <scope>NUCLEOTIDE SEQUENCE [LARGE SCALE GENOMIC DNA]</scope>
    <source>
        <strain>ATCC BAA-1458 / RM4099 / 269.97</strain>
    </source>
</reference>
<feature type="chain" id="PRO_1000007828" description="4-diphosphocytidyl-2-C-methyl-D-erythritol kinase">
    <location>
        <begin position="1"/>
        <end position="255"/>
    </location>
</feature>
<feature type="active site" evidence="1">
    <location>
        <position position="6"/>
    </location>
</feature>
<feature type="active site" evidence="1">
    <location>
        <position position="137"/>
    </location>
</feature>
<feature type="binding site" evidence="1">
    <location>
        <begin position="95"/>
        <end position="105"/>
    </location>
    <ligand>
        <name>ATP</name>
        <dbReference type="ChEBI" id="CHEBI:30616"/>
    </ligand>
</feature>
<evidence type="ECO:0000255" key="1">
    <source>
        <dbReference type="HAMAP-Rule" id="MF_00061"/>
    </source>
</evidence>
<name>ISPE_CAMJD</name>
<proteinExistence type="inferred from homology"/>